<comment type="function">
    <text evidence="1 4">Essential for the development of polarized epithelia, for cell polarity associated with asymmetric cell division of neuroblasts during development, and for oocyte polarity formation. Promotes the formation of actin-rich projections at the oocyte cortex and the posterior enrichment of par-1 which is required for oocyte polarization. Regulates the localization of axis-specifying morphogens such as stau and grk (By similarity). Could act as a tumor suppressor.</text>
</comment>
<comment type="subunit">
    <text evidence="2">May form multimeric complexes. Interacts with mahj. Interacts with aPKC; the interaction results in phosphorylation of l(2)gl. Interacts with ball.</text>
</comment>
<comment type="subcellular location">
    <subcellularLocation>
        <location evidence="4">Cell membrane</location>
    </subcellularLocation>
    <subcellularLocation>
        <location evidence="4">Secreted</location>
        <location evidence="4">Extracellular space</location>
        <location evidence="4">Extracellular matrix</location>
    </subcellularLocation>
    <text>Intercellular matrix.</text>
</comment>
<comment type="tissue specificity">
    <text evidence="4">Expressed in the epithelial cells of the digestive tract and in gonads, in the ovary's nurse and oocyte's follicle cells.</text>
</comment>
<comment type="developmental stage">
    <text evidence="4">Expressed abundantly in early embryogenesis. Moderate expression is found in larval and adult stages.</text>
</comment>
<comment type="PTM">
    <text evidence="1">Phosphorylated by aPKC which restricts l(2)gl activity to the oocyte posterior and is required for oocyte polarity formation.</text>
</comment>
<comment type="disruption phenotype">
    <text evidence="4">Malignant transformation of the optic centers of the larval brain and the imaginal disks.</text>
</comment>
<comment type="similarity">
    <text evidence="5">Belongs to the WD repeat L(2)GL family.</text>
</comment>
<feature type="chain" id="PRO_0000084346" description="Lethal(2) giant larvae protein">
    <location>
        <begin position="1"/>
        <end position="1166"/>
    </location>
</feature>
<feature type="repeat" description="WD 1">
    <location>
        <begin position="39"/>
        <end position="72"/>
    </location>
</feature>
<feature type="repeat" description="WD 2">
    <location>
        <begin position="82"/>
        <end position="128"/>
    </location>
</feature>
<feature type="repeat" description="WD 3">
    <location>
        <begin position="131"/>
        <end position="167"/>
    </location>
</feature>
<feature type="repeat" description="WD 4">
    <location>
        <begin position="189"/>
        <end position="223"/>
    </location>
</feature>
<feature type="repeat" description="WD 5">
    <location>
        <begin position="231"/>
        <end position="263"/>
    </location>
</feature>
<feature type="repeat" description="WD 6">
    <location>
        <begin position="278"/>
        <end position="320"/>
    </location>
</feature>
<feature type="repeat" description="WD 7">
    <location>
        <begin position="328"/>
        <end position="358"/>
    </location>
</feature>
<feature type="repeat" description="WD 8">
    <location>
        <begin position="380"/>
        <end position="464"/>
    </location>
</feature>
<feature type="repeat" description="WD 9">
    <location>
        <begin position="513"/>
        <end position="595"/>
    </location>
</feature>
<feature type="repeat" description="WD 10">
    <location>
        <begin position="604"/>
        <end position="665"/>
    </location>
</feature>
<feature type="repeat" description="WD 11">
    <location>
        <begin position="709"/>
        <end position="779"/>
    </location>
</feature>
<feature type="repeat" description="WD 12">
    <location>
        <begin position="788"/>
        <end position="833"/>
    </location>
</feature>
<feature type="repeat" description="WD 13">
    <location>
        <begin position="838"/>
        <end position="928"/>
    </location>
</feature>
<feature type="repeat" description="WD 14">
    <location>
        <begin position="942"/>
        <end position="965"/>
    </location>
</feature>
<feature type="region of interest" description="Disordered" evidence="3">
    <location>
        <begin position="867"/>
        <end position="888"/>
    </location>
</feature>
<feature type="region of interest" description="Disordered" evidence="3">
    <location>
        <begin position="975"/>
        <end position="1002"/>
    </location>
</feature>
<feature type="region of interest" description="Disordered" evidence="3">
    <location>
        <begin position="1144"/>
        <end position="1166"/>
    </location>
</feature>
<feature type="sequence conflict" description="In Ref. 1; CAA51715." evidence="5" ref="1">
    <original>AKLMAI</original>
    <variation>DQSSWR</variation>
    <location>
        <begin position="47"/>
        <end position="52"/>
    </location>
</feature>
<feature type="sequence conflict" description="In Ref. 1; CAA51715." evidence="5" ref="1">
    <original>H</original>
    <variation>Q</variation>
    <location>
        <position position="318"/>
    </location>
</feature>
<feature type="sequence conflict" description="In Ref. 1; CAA51715." evidence="5" ref="1">
    <original>DEV</original>
    <variation>GRKL</variation>
    <location>
        <begin position="429"/>
        <end position="431"/>
    </location>
</feature>
<feature type="sequence conflict" description="In Ref. 1; CAA51715." evidence="5" ref="1">
    <original>S</original>
    <variation>T</variation>
    <location>
        <position position="446"/>
    </location>
</feature>
<feature type="sequence conflict" description="In Ref. 1; CAA51715." evidence="5" ref="1">
    <original>S</original>
    <variation>T</variation>
    <location>
        <position position="855"/>
    </location>
</feature>
<feature type="sequence conflict" description="In Ref. 1; CAA51715." evidence="5" ref="1">
    <original>V</original>
    <variation>L</variation>
    <location>
        <position position="969"/>
    </location>
</feature>
<feature type="sequence conflict" description="In Ref. 1; CAA51715." evidence="5" ref="1">
    <original>A</original>
    <variation>R</variation>
    <location>
        <position position="1003"/>
    </location>
</feature>
<feature type="sequence conflict" description="In Ref. 1; CAA51715." evidence="5" ref="1">
    <original>ESE</original>
    <variation>DG</variation>
    <location>
        <begin position="1150"/>
        <end position="1152"/>
    </location>
</feature>
<gene>
    <name type="primary">l(2)gl</name>
    <name type="ORF">GA15420</name>
</gene>
<accession>Q08470</accession>
<accession>Q29NQ3</accession>
<protein>
    <recommendedName>
        <fullName>Lethal(2) giant larvae protein</fullName>
    </recommendedName>
    <alternativeName>
        <fullName>p127</fullName>
    </alternativeName>
</protein>
<organism>
    <name type="scientific">Drosophila pseudoobscura pseudoobscura</name>
    <name type="common">Fruit fly</name>
    <dbReference type="NCBI Taxonomy" id="46245"/>
    <lineage>
        <taxon>Eukaryota</taxon>
        <taxon>Metazoa</taxon>
        <taxon>Ecdysozoa</taxon>
        <taxon>Arthropoda</taxon>
        <taxon>Hexapoda</taxon>
        <taxon>Insecta</taxon>
        <taxon>Pterygota</taxon>
        <taxon>Neoptera</taxon>
        <taxon>Endopterygota</taxon>
        <taxon>Diptera</taxon>
        <taxon>Brachycera</taxon>
        <taxon>Muscomorpha</taxon>
        <taxon>Ephydroidea</taxon>
        <taxon>Drosophilidae</taxon>
        <taxon>Drosophila</taxon>
        <taxon>Sophophora</taxon>
    </lineage>
</organism>
<sequence length="1166" mass="127028">MLKFIRGKGQQPTAERQRLQKDLFAYRKTAQHGFPHKPSALAYDPVAKLMAIGTQTGAIKVFGQPGVELYAQHTLVNNSAAELNVQLLEWVYGTGRILSLTAANQLILWEPVGTTLVPIKTLPFDGKLKKVSSLCCSLNKDLLWIGTEGGNIYQLDLKSFTIREPVIYHDVVLEQVPPTYKLNPGAIESIRQLPNSLNKLLIAYNRGLCVLWDMQTSAVERAYIAPGHGQSVGLSVNSTGTEFSWYHADGSYATWSIDNGEPPQNVNYVPYGPDPCKSINRLYKGQRGTNDVIVFSGGMPRSAYGDHNCVSVHVSDGHKVCLDFTSKVIDFFVTYKEGSDDVEVLIVLLEEELCAYDLTDPSILSIKAPYLHSVHASAVTCNYLASQVTQGVYERILRAGDEQDIDYSSIDWPITGGVLTDDSVESDEDEVVKDYEILLTGHEDGSVKFWDCTGVLLKPIYNFKTASIFGNEHEYREDGAADISAEQLDEGEPPFRKAGLFDPYSDDPRLAVKKIAFCPKTGQLVVGGTAGQIVIADFDTAAEDQSSLKYNSMNLVSDRDGFVWKGHDQLNVRANLLEDNAVPLTENGVNITGVLQVLPPASITCMALEANWGLVSGGTAHGLVLFDFKNFVPVFHRCTLNPNDLTGAGEQLSRRKSFKKSLRESFRKLRKGRSTRNNPTNQVPTTLEARPVERQIEARCTDDGLGSMVRCLLFAKTYVTNVNITSPTLWSATNASTVSVFLLHLPPAQTAATTVPPASGNVPPQASRRISAQLAKEIQLKHRAPVVGISIFDQTGSPVDQFNAGENGSPPHRLLIASEEQFKVFSLPQLKPINKYKLTANEGARIRRIHFGSFSCRISPELLQSLHSGSPTKSVRSHGEGDGAGNVSATSAAGRGDLYHEMALICLTNMGDIMVLSVPELKRQLNAAAVRREDINGISSLCFTNDGEALYMMSSSELQRIALSTSKVVQPTGIVEVEPLESEDNETASLVNDGNESDKDGEANKELANTASDTQPPVATLRAKPLELNADRSSLHLTNGISNSNSPNRANETITSSIGDITVDSVRDHLNTTTTTLCSTTTEETVGRLSVLSTQTNQATTTVNMKDIPDINIPNLMDLASKSNTTETSTSSVVIKSVITSISHEKTNGESENVTTKTTAHEESQF</sequence>
<evidence type="ECO:0000250" key="1"/>
<evidence type="ECO:0000250" key="2">
    <source>
        <dbReference type="UniProtKB" id="P08111"/>
    </source>
</evidence>
<evidence type="ECO:0000256" key="3">
    <source>
        <dbReference type="SAM" id="MobiDB-lite"/>
    </source>
</evidence>
<evidence type="ECO:0000269" key="4">
    <source>
    </source>
</evidence>
<evidence type="ECO:0000305" key="5"/>
<reference key="1">
    <citation type="journal article" date="1993" name="Oncogene">
        <title>The l(2)gl homologue of Drosophila pseudoobscura suppresses tumorigenicity in transgenic Drosophila melanogaster.</title>
        <authorList>
            <person name="Toeroek I."/>
            <person name="Hartenstein K."/>
            <person name="Kalmes A."/>
            <person name="Schmitt R."/>
            <person name="Strand D."/>
            <person name="Mechler B.M."/>
        </authorList>
    </citation>
    <scope>NUCLEOTIDE SEQUENCE [GENOMIC DNA]</scope>
    <scope>FUNCTION</scope>
    <scope>SUBUNIT</scope>
    <scope>SUBCELLULAR LOCATION</scope>
    <scope>TISSUE SPECIFICITY</scope>
    <scope>DEVELOPMENTAL STAGE</scope>
    <scope>DISRUPTION PHENOTYPE</scope>
</reference>
<reference key="2">
    <citation type="journal article" date="2005" name="Genome Res.">
        <title>Comparative genome sequencing of Drosophila pseudoobscura: chromosomal, gene, and cis-element evolution.</title>
        <authorList>
            <person name="Richards S."/>
            <person name="Liu Y."/>
            <person name="Bettencourt B.R."/>
            <person name="Hradecky P."/>
            <person name="Letovsky S."/>
            <person name="Nielsen R."/>
            <person name="Thornton K."/>
            <person name="Hubisz M.J."/>
            <person name="Chen R."/>
            <person name="Meisel R.P."/>
            <person name="Couronne O."/>
            <person name="Hua S."/>
            <person name="Smith M.A."/>
            <person name="Zhang P."/>
            <person name="Liu J."/>
            <person name="Bussemaker H.J."/>
            <person name="van Batenburg M.F."/>
            <person name="Howells S.L."/>
            <person name="Scherer S.E."/>
            <person name="Sodergren E."/>
            <person name="Matthews B.B."/>
            <person name="Crosby M.A."/>
            <person name="Schroeder A.J."/>
            <person name="Ortiz-Barrientos D."/>
            <person name="Rives C.M."/>
            <person name="Metzker M.L."/>
            <person name="Muzny D.M."/>
            <person name="Scott G."/>
            <person name="Steffen D."/>
            <person name="Wheeler D.A."/>
            <person name="Worley K.C."/>
            <person name="Havlak P."/>
            <person name="Durbin K.J."/>
            <person name="Egan A."/>
            <person name="Gill R."/>
            <person name="Hume J."/>
            <person name="Morgan M.B."/>
            <person name="Miner G."/>
            <person name="Hamilton C."/>
            <person name="Huang Y."/>
            <person name="Waldron L."/>
            <person name="Verduzco D."/>
            <person name="Clerc-Blankenburg K.P."/>
            <person name="Dubchak I."/>
            <person name="Noor M.A.F."/>
            <person name="Anderson W."/>
            <person name="White K.P."/>
            <person name="Clark A.G."/>
            <person name="Schaeffer S.W."/>
            <person name="Gelbart W.M."/>
            <person name="Weinstock G.M."/>
            <person name="Gibbs R.A."/>
        </authorList>
    </citation>
    <scope>NUCLEOTIDE SEQUENCE [LARGE SCALE GENOMIC DNA]</scope>
    <source>
        <strain>MV2-25 / Tucson 14011-0121.94</strain>
    </source>
</reference>
<name>L2GL_DROPS</name>
<keyword id="KW-0131">Cell cycle</keyword>
<keyword id="KW-1003">Cell membrane</keyword>
<keyword id="KW-0268">Exocytosis</keyword>
<keyword id="KW-0272">Extracellular matrix</keyword>
<keyword id="KW-0472">Membrane</keyword>
<keyword id="KW-1185">Reference proteome</keyword>
<keyword id="KW-0677">Repeat</keyword>
<keyword id="KW-0964">Secreted</keyword>
<keyword id="KW-0043">Tumor suppressor</keyword>
<keyword id="KW-0853">WD repeat</keyword>
<proteinExistence type="evidence at protein level"/>
<dbReference type="EMBL" id="X73259">
    <property type="protein sequence ID" value="CAA51715.1"/>
    <property type="molecule type" value="Genomic_DNA"/>
</dbReference>
<dbReference type="EMBL" id="CH379059">
    <property type="protein sequence ID" value="EAL34165.2"/>
    <property type="molecule type" value="Genomic_DNA"/>
</dbReference>
<dbReference type="PIR" id="S37692">
    <property type="entry name" value="S37692"/>
</dbReference>
<dbReference type="RefSeq" id="XP_001357099.2">
    <property type="nucleotide sequence ID" value="XM_001357063.3"/>
</dbReference>
<dbReference type="RefSeq" id="XP_015035631.1">
    <property type="nucleotide sequence ID" value="XM_015180145.1"/>
</dbReference>
<dbReference type="SMR" id="Q08470"/>
<dbReference type="FunCoup" id="Q08470">
    <property type="interactions" value="482"/>
</dbReference>
<dbReference type="STRING" id="46245.Q08470"/>
<dbReference type="EnsemblMetazoa" id="FBtr0286771">
    <property type="protein sequence ID" value="FBpp0285209"/>
    <property type="gene ID" value="FBgn0012725"/>
</dbReference>
<dbReference type="EnsemblMetazoa" id="FBtr0366375">
    <property type="protein sequence ID" value="FBpp0329550"/>
    <property type="gene ID" value="FBgn0012725"/>
</dbReference>
<dbReference type="GeneID" id="4817731"/>
<dbReference type="KEGG" id="dpo:4817731"/>
<dbReference type="eggNOG" id="KOG1983">
    <property type="taxonomic scope" value="Eukaryota"/>
</dbReference>
<dbReference type="HOGENOM" id="CLU_005214_0_0_1"/>
<dbReference type="InParanoid" id="Q08470"/>
<dbReference type="OMA" id="TKNHSRP"/>
<dbReference type="ChiTaRS" id="l(2)gl">
    <property type="organism name" value="fly"/>
</dbReference>
<dbReference type="Proteomes" id="UP000001819">
    <property type="component" value="Chromosome 4"/>
</dbReference>
<dbReference type="Bgee" id="FBgn0012725">
    <property type="expression patterns" value="Expressed in female reproductive system and 2 other cell types or tissues"/>
</dbReference>
<dbReference type="ExpressionAtlas" id="Q08470">
    <property type="expression patterns" value="baseline"/>
</dbReference>
<dbReference type="GO" id="GO:0030864">
    <property type="term" value="C:cortical actin cytoskeleton"/>
    <property type="evidence" value="ECO:0007669"/>
    <property type="project" value="TreeGrafter"/>
</dbReference>
<dbReference type="GO" id="GO:0005576">
    <property type="term" value="C:extracellular region"/>
    <property type="evidence" value="ECO:0007669"/>
    <property type="project" value="UniProtKB-KW"/>
</dbReference>
<dbReference type="GO" id="GO:0005886">
    <property type="term" value="C:plasma membrane"/>
    <property type="evidence" value="ECO:0007669"/>
    <property type="project" value="UniProtKB-SubCell"/>
</dbReference>
<dbReference type="GO" id="GO:0005096">
    <property type="term" value="F:GTPase activator activity"/>
    <property type="evidence" value="ECO:0007669"/>
    <property type="project" value="TreeGrafter"/>
</dbReference>
<dbReference type="GO" id="GO:0045159">
    <property type="term" value="F:myosin II binding"/>
    <property type="evidence" value="ECO:0007669"/>
    <property type="project" value="TreeGrafter"/>
</dbReference>
<dbReference type="GO" id="GO:0019905">
    <property type="term" value="F:syntaxin binding"/>
    <property type="evidence" value="ECO:0007669"/>
    <property type="project" value="TreeGrafter"/>
</dbReference>
<dbReference type="GO" id="GO:0030866">
    <property type="term" value="P:cortical actin cytoskeleton organization"/>
    <property type="evidence" value="ECO:0007669"/>
    <property type="project" value="TreeGrafter"/>
</dbReference>
<dbReference type="GO" id="GO:0051294">
    <property type="term" value="P:establishment of spindle orientation"/>
    <property type="evidence" value="ECO:0007669"/>
    <property type="project" value="TreeGrafter"/>
</dbReference>
<dbReference type="GO" id="GO:0006887">
    <property type="term" value="P:exocytosis"/>
    <property type="evidence" value="ECO:0007669"/>
    <property type="project" value="UniProtKB-KW"/>
</dbReference>
<dbReference type="GO" id="GO:0006893">
    <property type="term" value="P:Golgi to plasma membrane transport"/>
    <property type="evidence" value="ECO:0007669"/>
    <property type="project" value="TreeGrafter"/>
</dbReference>
<dbReference type="GO" id="GO:0032878">
    <property type="term" value="P:regulation of establishment or maintenance of cell polarity"/>
    <property type="evidence" value="ECO:0007669"/>
    <property type="project" value="TreeGrafter"/>
</dbReference>
<dbReference type="GO" id="GO:0008593">
    <property type="term" value="P:regulation of Notch signaling pathway"/>
    <property type="evidence" value="ECO:0007669"/>
    <property type="project" value="TreeGrafter"/>
</dbReference>
<dbReference type="FunFam" id="2.130.10.10:FF:001433">
    <property type="entry name" value="Lethal(2) giant larvae protein"/>
    <property type="match status" value="1"/>
</dbReference>
<dbReference type="Gene3D" id="2.130.10.10">
    <property type="entry name" value="YVTN repeat-like/Quinoprotein amine dehydrogenase"/>
    <property type="match status" value="2"/>
</dbReference>
<dbReference type="InterPro" id="IPR000664">
    <property type="entry name" value="Lethal2_giant"/>
</dbReference>
<dbReference type="InterPro" id="IPR013577">
    <property type="entry name" value="LLGL2"/>
</dbReference>
<dbReference type="InterPro" id="IPR015943">
    <property type="entry name" value="WD40/YVTN_repeat-like_dom_sf"/>
</dbReference>
<dbReference type="InterPro" id="IPR036322">
    <property type="entry name" value="WD40_repeat_dom_sf"/>
</dbReference>
<dbReference type="InterPro" id="IPR001680">
    <property type="entry name" value="WD40_rpt"/>
</dbReference>
<dbReference type="PANTHER" id="PTHR10241">
    <property type="entry name" value="LETHAL 2 GIANT LARVAE PROTEIN"/>
    <property type="match status" value="1"/>
</dbReference>
<dbReference type="PANTHER" id="PTHR10241:SF29">
    <property type="entry name" value="LETHAL(2) GIANT LARVAE PROTEIN"/>
    <property type="match status" value="1"/>
</dbReference>
<dbReference type="Pfam" id="PF08366">
    <property type="entry name" value="LLGL"/>
    <property type="match status" value="1"/>
</dbReference>
<dbReference type="PRINTS" id="PR00962">
    <property type="entry name" value="LETHAL2GIANT"/>
</dbReference>
<dbReference type="SMART" id="SM00320">
    <property type="entry name" value="WD40"/>
    <property type="match status" value="5"/>
</dbReference>
<dbReference type="SUPFAM" id="SSF50978">
    <property type="entry name" value="WD40 repeat-like"/>
    <property type="match status" value="2"/>
</dbReference>
<dbReference type="PROSITE" id="PS00678">
    <property type="entry name" value="WD_REPEATS_1"/>
    <property type="match status" value="1"/>
</dbReference>